<organism>
    <name type="scientific">Streptococcus pyogenes serotype M2 (strain MGAS10270)</name>
    <dbReference type="NCBI Taxonomy" id="370552"/>
    <lineage>
        <taxon>Bacteria</taxon>
        <taxon>Bacillati</taxon>
        <taxon>Bacillota</taxon>
        <taxon>Bacilli</taxon>
        <taxon>Lactobacillales</taxon>
        <taxon>Streptococcaceae</taxon>
        <taxon>Streptococcus</taxon>
    </lineage>
</organism>
<accession>Q1JGC1</accession>
<gene>
    <name evidence="1" type="primary">aroA</name>
    <name type="ordered locus">MGAS10270_Spy1158</name>
</gene>
<name>AROA_STRPD</name>
<sequence length="430" mass="46669">MKRMKLRTNAGPLQGTIQVPGDKSISHRAVILGAVAKGETRVKGLLKGEDVLSTIQAFRNLGVRIEEKDDQLVIEGQGFQGLNAPCQTLNMGNSGTSMRLIAGLLAGQPFSVKMIGDESLSKRPMDRIVYPLKQMGVEISGETDRQFPPLQLQGNRNLQPITYTLPISSAQVKSAILLAALQAKGTTQVVEKEITRNHTEEMIQQFGGRLIVDGKRITLVGPQQLTAQEITVPGDISSAAFWLVAGLIIPGSELLLKNVGVNPTRTGILEVVEKMGAQIAYEDMNKKEQVTSIRVVYSHLKGTIISGGLIPRLIDELPIIALLATQAQGTTCIKDAQELRVKETDRIQVVTDILNSMGANIKATADGMIIKGPTVLYGANTSTYGDHRIGMMTAIAALLVKQGQVHLDKEEAIMTSYPTFFKDLERLCHD</sequence>
<comment type="function">
    <text evidence="1">Catalyzes the transfer of the enolpyruvyl moiety of phosphoenolpyruvate (PEP) to the 5-hydroxyl of shikimate-3-phosphate (S3P) to produce enolpyruvyl shikimate-3-phosphate and inorganic phosphate.</text>
</comment>
<comment type="catalytic activity">
    <reaction evidence="1">
        <text>3-phosphoshikimate + phosphoenolpyruvate = 5-O-(1-carboxyvinyl)-3-phosphoshikimate + phosphate</text>
        <dbReference type="Rhea" id="RHEA:21256"/>
        <dbReference type="ChEBI" id="CHEBI:43474"/>
        <dbReference type="ChEBI" id="CHEBI:57701"/>
        <dbReference type="ChEBI" id="CHEBI:58702"/>
        <dbReference type="ChEBI" id="CHEBI:145989"/>
        <dbReference type="EC" id="2.5.1.19"/>
    </reaction>
    <physiologicalReaction direction="left-to-right" evidence="1">
        <dbReference type="Rhea" id="RHEA:21257"/>
    </physiologicalReaction>
</comment>
<comment type="pathway">
    <text evidence="1">Metabolic intermediate biosynthesis; chorismate biosynthesis; chorismate from D-erythrose 4-phosphate and phosphoenolpyruvate: step 6/7.</text>
</comment>
<comment type="subunit">
    <text evidence="1">Monomer.</text>
</comment>
<comment type="subcellular location">
    <subcellularLocation>
        <location evidence="1">Cytoplasm</location>
    </subcellularLocation>
</comment>
<comment type="similarity">
    <text evidence="1">Belongs to the EPSP synthase family.</text>
</comment>
<reference key="1">
    <citation type="journal article" date="2006" name="Proc. Natl. Acad. Sci. U.S.A.">
        <title>Molecular genetic anatomy of inter- and intraserotype variation in the human bacterial pathogen group A Streptococcus.</title>
        <authorList>
            <person name="Beres S.B."/>
            <person name="Richter E.W."/>
            <person name="Nagiec M.J."/>
            <person name="Sumby P."/>
            <person name="Porcella S.F."/>
            <person name="DeLeo F.R."/>
            <person name="Musser J.M."/>
        </authorList>
    </citation>
    <scope>NUCLEOTIDE SEQUENCE [LARGE SCALE GENOMIC DNA]</scope>
    <source>
        <strain>MGAS10270</strain>
    </source>
</reference>
<evidence type="ECO:0000255" key="1">
    <source>
        <dbReference type="HAMAP-Rule" id="MF_00210"/>
    </source>
</evidence>
<keyword id="KW-0028">Amino-acid biosynthesis</keyword>
<keyword id="KW-0057">Aromatic amino acid biosynthesis</keyword>
<keyword id="KW-0963">Cytoplasm</keyword>
<keyword id="KW-0808">Transferase</keyword>
<proteinExistence type="inferred from homology"/>
<protein>
    <recommendedName>
        <fullName evidence="1">3-phosphoshikimate 1-carboxyvinyltransferase</fullName>
        <ecNumber evidence="1">2.5.1.19</ecNumber>
    </recommendedName>
    <alternativeName>
        <fullName evidence="1">5-enolpyruvylshikimate-3-phosphate synthase</fullName>
        <shortName evidence="1">EPSP synthase</shortName>
        <shortName evidence="1">EPSPS</shortName>
    </alternativeName>
</protein>
<feature type="chain" id="PRO_1000012493" description="3-phosphoshikimate 1-carboxyvinyltransferase">
    <location>
        <begin position="1"/>
        <end position="430"/>
    </location>
</feature>
<feature type="active site" description="Proton acceptor" evidence="1">
    <location>
        <position position="315"/>
    </location>
</feature>
<feature type="binding site" evidence="1">
    <location>
        <position position="23"/>
    </location>
    <ligand>
        <name>3-phosphoshikimate</name>
        <dbReference type="ChEBI" id="CHEBI:145989"/>
    </ligand>
</feature>
<feature type="binding site" evidence="1">
    <location>
        <position position="23"/>
    </location>
    <ligand>
        <name>phosphoenolpyruvate</name>
        <dbReference type="ChEBI" id="CHEBI:58702"/>
    </ligand>
</feature>
<feature type="binding site" evidence="1">
    <location>
        <position position="24"/>
    </location>
    <ligand>
        <name>3-phosphoshikimate</name>
        <dbReference type="ChEBI" id="CHEBI:145989"/>
    </ligand>
</feature>
<feature type="binding site" evidence="1">
    <location>
        <position position="28"/>
    </location>
    <ligand>
        <name>3-phosphoshikimate</name>
        <dbReference type="ChEBI" id="CHEBI:145989"/>
    </ligand>
</feature>
<feature type="binding site" evidence="1">
    <location>
        <position position="95"/>
    </location>
    <ligand>
        <name>phosphoenolpyruvate</name>
        <dbReference type="ChEBI" id="CHEBI:58702"/>
    </ligand>
</feature>
<feature type="binding site" evidence="1">
    <location>
        <position position="123"/>
    </location>
    <ligand>
        <name>phosphoenolpyruvate</name>
        <dbReference type="ChEBI" id="CHEBI:58702"/>
    </ligand>
</feature>
<feature type="binding site" evidence="1">
    <location>
        <position position="169"/>
    </location>
    <ligand>
        <name>3-phosphoshikimate</name>
        <dbReference type="ChEBI" id="CHEBI:145989"/>
    </ligand>
</feature>
<feature type="binding site" evidence="1">
    <location>
        <position position="171"/>
    </location>
    <ligand>
        <name>3-phosphoshikimate</name>
        <dbReference type="ChEBI" id="CHEBI:145989"/>
    </ligand>
</feature>
<feature type="binding site" evidence="1">
    <location>
        <position position="171"/>
    </location>
    <ligand>
        <name>phosphoenolpyruvate</name>
        <dbReference type="ChEBI" id="CHEBI:58702"/>
    </ligand>
</feature>
<feature type="binding site" evidence="1">
    <location>
        <position position="315"/>
    </location>
    <ligand>
        <name>3-phosphoshikimate</name>
        <dbReference type="ChEBI" id="CHEBI:145989"/>
    </ligand>
</feature>
<feature type="binding site" evidence="1">
    <location>
        <position position="342"/>
    </location>
    <ligand>
        <name>3-phosphoshikimate</name>
        <dbReference type="ChEBI" id="CHEBI:145989"/>
    </ligand>
</feature>
<feature type="binding site" evidence="1">
    <location>
        <position position="346"/>
    </location>
    <ligand>
        <name>phosphoenolpyruvate</name>
        <dbReference type="ChEBI" id="CHEBI:58702"/>
    </ligand>
</feature>
<feature type="binding site" evidence="1">
    <location>
        <position position="388"/>
    </location>
    <ligand>
        <name>phosphoenolpyruvate</name>
        <dbReference type="ChEBI" id="CHEBI:58702"/>
    </ligand>
</feature>
<dbReference type="EC" id="2.5.1.19" evidence="1"/>
<dbReference type="EMBL" id="CP000260">
    <property type="protein sequence ID" value="ABF34223.1"/>
    <property type="molecule type" value="Genomic_DNA"/>
</dbReference>
<dbReference type="SMR" id="Q1JGC1"/>
<dbReference type="KEGG" id="sph:MGAS10270_Spy1158"/>
<dbReference type="HOGENOM" id="CLU_024321_0_1_9"/>
<dbReference type="UniPathway" id="UPA00053">
    <property type="reaction ID" value="UER00089"/>
</dbReference>
<dbReference type="Proteomes" id="UP000002436">
    <property type="component" value="Chromosome"/>
</dbReference>
<dbReference type="GO" id="GO:0005737">
    <property type="term" value="C:cytoplasm"/>
    <property type="evidence" value="ECO:0007669"/>
    <property type="project" value="UniProtKB-SubCell"/>
</dbReference>
<dbReference type="GO" id="GO:0003866">
    <property type="term" value="F:3-phosphoshikimate 1-carboxyvinyltransferase activity"/>
    <property type="evidence" value="ECO:0007669"/>
    <property type="project" value="UniProtKB-UniRule"/>
</dbReference>
<dbReference type="GO" id="GO:0008652">
    <property type="term" value="P:amino acid biosynthetic process"/>
    <property type="evidence" value="ECO:0007669"/>
    <property type="project" value="UniProtKB-KW"/>
</dbReference>
<dbReference type="GO" id="GO:0009073">
    <property type="term" value="P:aromatic amino acid family biosynthetic process"/>
    <property type="evidence" value="ECO:0007669"/>
    <property type="project" value="UniProtKB-KW"/>
</dbReference>
<dbReference type="GO" id="GO:0009423">
    <property type="term" value="P:chorismate biosynthetic process"/>
    <property type="evidence" value="ECO:0007669"/>
    <property type="project" value="UniProtKB-UniRule"/>
</dbReference>
<dbReference type="CDD" id="cd01556">
    <property type="entry name" value="EPSP_synthase"/>
    <property type="match status" value="1"/>
</dbReference>
<dbReference type="FunFam" id="3.65.10.10:FF:000005">
    <property type="entry name" value="3-phosphoshikimate 1-carboxyvinyltransferase"/>
    <property type="match status" value="1"/>
</dbReference>
<dbReference type="FunFam" id="3.65.10.10:FF:000006">
    <property type="entry name" value="3-phosphoshikimate 1-carboxyvinyltransferase"/>
    <property type="match status" value="1"/>
</dbReference>
<dbReference type="Gene3D" id="3.65.10.10">
    <property type="entry name" value="Enolpyruvate transferase domain"/>
    <property type="match status" value="2"/>
</dbReference>
<dbReference type="HAMAP" id="MF_00210">
    <property type="entry name" value="EPSP_synth"/>
    <property type="match status" value="1"/>
</dbReference>
<dbReference type="InterPro" id="IPR001986">
    <property type="entry name" value="Enolpyruvate_Tfrase_dom"/>
</dbReference>
<dbReference type="InterPro" id="IPR036968">
    <property type="entry name" value="Enolpyruvate_Tfrase_sf"/>
</dbReference>
<dbReference type="InterPro" id="IPR006264">
    <property type="entry name" value="EPSP_synthase"/>
</dbReference>
<dbReference type="InterPro" id="IPR023193">
    <property type="entry name" value="EPSP_synthase_CS"/>
</dbReference>
<dbReference type="InterPro" id="IPR013792">
    <property type="entry name" value="RNA3'P_cycl/enolpyr_Trfase_a/b"/>
</dbReference>
<dbReference type="NCBIfam" id="TIGR01356">
    <property type="entry name" value="aroA"/>
    <property type="match status" value="1"/>
</dbReference>
<dbReference type="PANTHER" id="PTHR21090">
    <property type="entry name" value="AROM/DEHYDROQUINATE SYNTHASE"/>
    <property type="match status" value="1"/>
</dbReference>
<dbReference type="PANTHER" id="PTHR21090:SF5">
    <property type="entry name" value="PENTAFUNCTIONAL AROM POLYPEPTIDE"/>
    <property type="match status" value="1"/>
</dbReference>
<dbReference type="Pfam" id="PF00275">
    <property type="entry name" value="EPSP_synthase"/>
    <property type="match status" value="1"/>
</dbReference>
<dbReference type="PIRSF" id="PIRSF000505">
    <property type="entry name" value="EPSPS"/>
    <property type="match status" value="1"/>
</dbReference>
<dbReference type="SUPFAM" id="SSF55205">
    <property type="entry name" value="EPT/RTPC-like"/>
    <property type="match status" value="1"/>
</dbReference>
<dbReference type="PROSITE" id="PS00104">
    <property type="entry name" value="EPSP_SYNTHASE_1"/>
    <property type="match status" value="1"/>
</dbReference>
<dbReference type="PROSITE" id="PS00885">
    <property type="entry name" value="EPSP_SYNTHASE_2"/>
    <property type="match status" value="1"/>
</dbReference>